<evidence type="ECO:0000255" key="1">
    <source>
        <dbReference type="PROSITE-ProRule" id="PRU00307"/>
    </source>
</evidence>
<dbReference type="EMBL" id="L19201">
    <property type="protein sequence ID" value="AAB03006.1"/>
    <property type="molecule type" value="Genomic_DNA"/>
</dbReference>
<dbReference type="EMBL" id="U00096">
    <property type="protein sequence ID" value="AAC76869.1"/>
    <property type="molecule type" value="Genomic_DNA"/>
</dbReference>
<dbReference type="EMBL" id="AP009048">
    <property type="protein sequence ID" value="BAE77437.1"/>
    <property type="molecule type" value="Genomic_DNA"/>
</dbReference>
<dbReference type="PIR" id="S40817">
    <property type="entry name" value="S40817"/>
</dbReference>
<dbReference type="RefSeq" id="NP_418308.1">
    <property type="nucleotide sequence ID" value="NC_000913.3"/>
</dbReference>
<dbReference type="RefSeq" id="WP_000829798.1">
    <property type="nucleotide sequence ID" value="NZ_SSZK01000026.1"/>
</dbReference>
<dbReference type="SMR" id="P0ACM9"/>
<dbReference type="BioGRID" id="4262632">
    <property type="interactions" value="88"/>
</dbReference>
<dbReference type="BioGRID" id="852665">
    <property type="interactions" value="5"/>
</dbReference>
<dbReference type="FunCoup" id="P0ACM9">
    <property type="interactions" value="61"/>
</dbReference>
<dbReference type="IntAct" id="P0ACM9">
    <property type="interactions" value="9"/>
</dbReference>
<dbReference type="STRING" id="511145.b3872"/>
<dbReference type="jPOST" id="P0ACM9"/>
<dbReference type="PaxDb" id="511145-b3872"/>
<dbReference type="EnsemblBacteria" id="AAC76869">
    <property type="protein sequence ID" value="AAC76869"/>
    <property type="gene ID" value="b3872"/>
</dbReference>
<dbReference type="GeneID" id="948368"/>
<dbReference type="KEGG" id="ecj:JW3843"/>
<dbReference type="KEGG" id="eco:b3872"/>
<dbReference type="KEGG" id="ecoc:C3026_20935"/>
<dbReference type="PATRIC" id="fig|1411691.4.peg.2839"/>
<dbReference type="EchoBASE" id="EB1784"/>
<dbReference type="eggNOG" id="COG2188">
    <property type="taxonomic scope" value="Bacteria"/>
</dbReference>
<dbReference type="HOGENOM" id="CLU_063236_2_2_6"/>
<dbReference type="InParanoid" id="P0ACM9"/>
<dbReference type="OMA" id="FYHETFI"/>
<dbReference type="OrthoDB" id="9784545at2"/>
<dbReference type="PhylomeDB" id="P0ACM9"/>
<dbReference type="BioCyc" id="EcoCyc:EG11838-MONOMER"/>
<dbReference type="PRO" id="PR:P0ACM9"/>
<dbReference type="Proteomes" id="UP000000625">
    <property type="component" value="Chromosome"/>
</dbReference>
<dbReference type="GO" id="GO:0003677">
    <property type="term" value="F:DNA binding"/>
    <property type="evidence" value="ECO:0007669"/>
    <property type="project" value="UniProtKB-KW"/>
</dbReference>
<dbReference type="GO" id="GO:0003700">
    <property type="term" value="F:DNA-binding transcription factor activity"/>
    <property type="evidence" value="ECO:0007669"/>
    <property type="project" value="InterPro"/>
</dbReference>
<dbReference type="GO" id="GO:0045892">
    <property type="term" value="P:negative regulation of DNA-templated transcription"/>
    <property type="evidence" value="ECO:0000318"/>
    <property type="project" value="GO_Central"/>
</dbReference>
<dbReference type="CDD" id="cd07377">
    <property type="entry name" value="WHTH_GntR"/>
    <property type="match status" value="1"/>
</dbReference>
<dbReference type="FunFam" id="1.10.10.10:FF:000351">
    <property type="entry name" value="GntR family transcriptional regulator"/>
    <property type="match status" value="1"/>
</dbReference>
<dbReference type="FunFam" id="3.40.1410.10:FF:000007">
    <property type="entry name" value="GntR family transcriptional regulator"/>
    <property type="match status" value="1"/>
</dbReference>
<dbReference type="Gene3D" id="3.40.1410.10">
    <property type="entry name" value="Chorismate lyase-like"/>
    <property type="match status" value="1"/>
</dbReference>
<dbReference type="Gene3D" id="1.10.10.10">
    <property type="entry name" value="Winged helix-like DNA-binding domain superfamily/Winged helix DNA-binding domain"/>
    <property type="match status" value="1"/>
</dbReference>
<dbReference type="InterPro" id="IPR050679">
    <property type="entry name" value="Bact_HTH_transcr_reg"/>
</dbReference>
<dbReference type="InterPro" id="IPR028978">
    <property type="entry name" value="Chorismate_lyase_/UTRA_dom_sf"/>
</dbReference>
<dbReference type="InterPro" id="IPR000524">
    <property type="entry name" value="Tscrpt_reg_HTH_GntR"/>
</dbReference>
<dbReference type="InterPro" id="IPR011663">
    <property type="entry name" value="UTRA"/>
</dbReference>
<dbReference type="InterPro" id="IPR036388">
    <property type="entry name" value="WH-like_DNA-bd_sf"/>
</dbReference>
<dbReference type="InterPro" id="IPR036390">
    <property type="entry name" value="WH_DNA-bd_sf"/>
</dbReference>
<dbReference type="PANTHER" id="PTHR44846">
    <property type="entry name" value="MANNOSYL-D-GLYCERATE TRANSPORT/METABOLISM SYSTEM REPRESSOR MNGR-RELATED"/>
    <property type="match status" value="1"/>
</dbReference>
<dbReference type="PANTHER" id="PTHR44846:SF7">
    <property type="entry name" value="TRANSCRIPTIONAL REGULATOR OF 2-AMINOETHYLPHOSPHONATE DEGRADATION OPERONS-RELATED"/>
    <property type="match status" value="1"/>
</dbReference>
<dbReference type="Pfam" id="PF00392">
    <property type="entry name" value="GntR"/>
    <property type="match status" value="1"/>
</dbReference>
<dbReference type="Pfam" id="PF07702">
    <property type="entry name" value="UTRA"/>
    <property type="match status" value="1"/>
</dbReference>
<dbReference type="PRINTS" id="PR00035">
    <property type="entry name" value="HTHGNTR"/>
</dbReference>
<dbReference type="SMART" id="SM00345">
    <property type="entry name" value="HTH_GNTR"/>
    <property type="match status" value="1"/>
</dbReference>
<dbReference type="SMART" id="SM00866">
    <property type="entry name" value="UTRA"/>
    <property type="match status" value="1"/>
</dbReference>
<dbReference type="SUPFAM" id="SSF64288">
    <property type="entry name" value="Chorismate lyase-like"/>
    <property type="match status" value="1"/>
</dbReference>
<dbReference type="SUPFAM" id="SSF46785">
    <property type="entry name" value="Winged helix' DNA-binding domain"/>
    <property type="match status" value="1"/>
</dbReference>
<dbReference type="PROSITE" id="PS50949">
    <property type="entry name" value="HTH_GNTR"/>
    <property type="match status" value="1"/>
</dbReference>
<organism>
    <name type="scientific">Escherichia coli (strain K12)</name>
    <dbReference type="NCBI Taxonomy" id="83333"/>
    <lineage>
        <taxon>Bacteria</taxon>
        <taxon>Pseudomonadati</taxon>
        <taxon>Pseudomonadota</taxon>
        <taxon>Gammaproteobacteria</taxon>
        <taxon>Enterobacterales</taxon>
        <taxon>Enterobacteriaceae</taxon>
        <taxon>Escherichia</taxon>
    </lineage>
</organism>
<gene>
    <name type="primary">yihL</name>
    <name type="ordered locus">b3872</name>
    <name type="ordered locus">JW3843</name>
</gene>
<sequence>MAENQSTVENAKEKLDRWLKDGITTPGGKLPSERELGELLGIKRMTLRQALLNLEAESKIFRKDRKGWFVTQPRFNYSPELSASFQRAAIEQGREPSWGFTEKNRTSDIPETLAPLIAVTPSTELYRITGWGALEGHKVFYHETYINPEVAPGFIEQLENHSFSAVWEKCYQKETVVKKLIFKPVRMPGDISKYLGGSAGMPAILIEKHRADQQGNIVQIDIEYWRFEAVDLIINL</sequence>
<protein>
    <recommendedName>
        <fullName>Uncharacterized HTH-type transcriptional regulator YihL</fullName>
    </recommendedName>
</protein>
<name>YIHL_ECOLI</name>
<reference key="1">
    <citation type="journal article" date="1993" name="Nucleic Acids Res.">
        <title>Analysis of the Escherichia coli genome. III. DNA sequence of the region from 87.2 to 89.2 minutes.</title>
        <authorList>
            <person name="Plunkett G. III"/>
            <person name="Burland V."/>
            <person name="Daniels D.L."/>
            <person name="Blattner F.R."/>
        </authorList>
    </citation>
    <scope>NUCLEOTIDE SEQUENCE [LARGE SCALE GENOMIC DNA]</scope>
    <source>
        <strain>K12 / MG1655 / ATCC 47076</strain>
    </source>
</reference>
<reference key="2">
    <citation type="journal article" date="1997" name="Science">
        <title>The complete genome sequence of Escherichia coli K-12.</title>
        <authorList>
            <person name="Blattner F.R."/>
            <person name="Plunkett G. III"/>
            <person name="Bloch C.A."/>
            <person name="Perna N.T."/>
            <person name="Burland V."/>
            <person name="Riley M."/>
            <person name="Collado-Vides J."/>
            <person name="Glasner J.D."/>
            <person name="Rode C.K."/>
            <person name="Mayhew G.F."/>
            <person name="Gregor J."/>
            <person name="Davis N.W."/>
            <person name="Kirkpatrick H.A."/>
            <person name="Goeden M.A."/>
            <person name="Rose D.J."/>
            <person name="Mau B."/>
            <person name="Shao Y."/>
        </authorList>
    </citation>
    <scope>NUCLEOTIDE SEQUENCE [LARGE SCALE GENOMIC DNA]</scope>
    <source>
        <strain>K12 / MG1655 / ATCC 47076</strain>
    </source>
</reference>
<reference key="3">
    <citation type="journal article" date="2006" name="Mol. Syst. Biol.">
        <title>Highly accurate genome sequences of Escherichia coli K-12 strains MG1655 and W3110.</title>
        <authorList>
            <person name="Hayashi K."/>
            <person name="Morooka N."/>
            <person name="Yamamoto Y."/>
            <person name="Fujita K."/>
            <person name="Isono K."/>
            <person name="Choi S."/>
            <person name="Ohtsubo E."/>
            <person name="Baba T."/>
            <person name="Wanner B.L."/>
            <person name="Mori H."/>
            <person name="Horiuchi T."/>
        </authorList>
    </citation>
    <scope>NUCLEOTIDE SEQUENCE [LARGE SCALE GENOMIC DNA]</scope>
    <source>
        <strain>K12 / W3110 / ATCC 27325 / DSM 5911</strain>
    </source>
</reference>
<keyword id="KW-0238">DNA-binding</keyword>
<keyword id="KW-1185">Reference proteome</keyword>
<keyword id="KW-0804">Transcription</keyword>
<keyword id="KW-0805">Transcription regulation</keyword>
<feature type="chain" id="PRO_0000050683" description="Uncharacterized HTH-type transcriptional regulator YihL">
    <location>
        <begin position="1"/>
        <end position="236"/>
    </location>
</feature>
<feature type="domain" description="HTH gntR-type" evidence="1">
    <location>
        <begin position="5"/>
        <end position="73"/>
    </location>
</feature>
<feature type="DNA-binding region" description="H-T-H motif" evidence="1">
    <location>
        <begin position="33"/>
        <end position="52"/>
    </location>
</feature>
<accession>P0ACM9</accession>
<accession>P32133</accession>
<accession>Q2M8G9</accession>
<proteinExistence type="predicted"/>